<sequence>MEIIKISPRGYCYGVIDAMVIAKNASLDPNLPRPIHILGMIVHNKHVTDAFESIGIYTVDGANREEILDKITTGTVIFTAHGVSPSVKAKAVAKGLTTIDATCPDVLHTYNLILEKQAAGYEIIYIGKKGHPEPEGAYGTAPDVVHLVETKADIDALSLLSDKIFVTNQTTMSKWDVADLMHYIKGKFPKAIQHQEICMATQVRQEAVALQAKDADLTIVVGDPRSNNTARLAQVSIEKAGTKAYRIADITELDIEWIKDAKKVAVTAGASTPTQLVREVLLFLEQFDAADKTTWKREHNQDFERILPKTKNKYMAEKRSQRLAHLKNGGS</sequence>
<organism>
    <name type="scientific">Listeria monocytogenes serovar 1/2a (strain ATCC BAA-679 / EGD-e)</name>
    <dbReference type="NCBI Taxonomy" id="169963"/>
    <lineage>
        <taxon>Bacteria</taxon>
        <taxon>Bacillati</taxon>
        <taxon>Bacillota</taxon>
        <taxon>Bacilli</taxon>
        <taxon>Bacillales</taxon>
        <taxon>Listeriaceae</taxon>
        <taxon>Listeria</taxon>
    </lineage>
</organism>
<protein>
    <recommendedName>
        <fullName evidence="1">4-hydroxy-3-methylbut-2-enyl diphosphate reductase</fullName>
        <shortName evidence="1">HMBPP reductase</shortName>
        <ecNumber evidence="1">1.17.7.4</ecNumber>
    </recommendedName>
</protein>
<name>ISPH_LISMO</name>
<dbReference type="EC" id="1.17.7.4" evidence="1"/>
<dbReference type="EMBL" id="AL591979">
    <property type="protein sequence ID" value="CAC99529.1"/>
    <property type="molecule type" value="Genomic_DNA"/>
</dbReference>
<dbReference type="PIR" id="AC1256">
    <property type="entry name" value="AC1256"/>
</dbReference>
<dbReference type="RefSeq" id="NP_464976.1">
    <property type="nucleotide sequence ID" value="NC_003210.1"/>
</dbReference>
<dbReference type="RefSeq" id="WP_010990127.1">
    <property type="nucleotide sequence ID" value="NZ_CP149495.1"/>
</dbReference>
<dbReference type="SMR" id="P58676"/>
<dbReference type="STRING" id="169963.gene:17594108"/>
<dbReference type="PaxDb" id="169963-lmo1451"/>
<dbReference type="EnsemblBacteria" id="CAC99529">
    <property type="protein sequence ID" value="CAC99529"/>
    <property type="gene ID" value="CAC99529"/>
</dbReference>
<dbReference type="GeneID" id="987625"/>
<dbReference type="KEGG" id="lmo:lmo1451"/>
<dbReference type="PATRIC" id="fig|169963.11.peg.1490"/>
<dbReference type="eggNOG" id="COG0761">
    <property type="taxonomic scope" value="Bacteria"/>
</dbReference>
<dbReference type="HOGENOM" id="CLU_027486_0_0_9"/>
<dbReference type="OrthoDB" id="9777362at2"/>
<dbReference type="PhylomeDB" id="P58676"/>
<dbReference type="BioCyc" id="LMON169963:LMO1451-MONOMER"/>
<dbReference type="UniPathway" id="UPA00056">
    <property type="reaction ID" value="UER00097"/>
</dbReference>
<dbReference type="UniPathway" id="UPA00059">
    <property type="reaction ID" value="UER00105"/>
</dbReference>
<dbReference type="Proteomes" id="UP000000817">
    <property type="component" value="Chromosome"/>
</dbReference>
<dbReference type="GO" id="GO:0005829">
    <property type="term" value="C:cytosol"/>
    <property type="evidence" value="ECO:0000318"/>
    <property type="project" value="GO_Central"/>
</dbReference>
<dbReference type="GO" id="GO:0051539">
    <property type="term" value="F:4 iron, 4 sulfur cluster binding"/>
    <property type="evidence" value="ECO:0007669"/>
    <property type="project" value="UniProtKB-UniRule"/>
</dbReference>
<dbReference type="GO" id="GO:0051745">
    <property type="term" value="F:4-hydroxy-3-methylbut-2-enyl diphosphate reductase activity"/>
    <property type="evidence" value="ECO:0000318"/>
    <property type="project" value="GO_Central"/>
</dbReference>
<dbReference type="GO" id="GO:0046872">
    <property type="term" value="F:metal ion binding"/>
    <property type="evidence" value="ECO:0007669"/>
    <property type="project" value="UniProtKB-KW"/>
</dbReference>
<dbReference type="GO" id="GO:0050992">
    <property type="term" value="P:dimethylallyl diphosphate biosynthetic process"/>
    <property type="evidence" value="ECO:0007669"/>
    <property type="project" value="UniProtKB-UniRule"/>
</dbReference>
<dbReference type="GO" id="GO:0019288">
    <property type="term" value="P:isopentenyl diphosphate biosynthetic process, methylerythritol 4-phosphate pathway"/>
    <property type="evidence" value="ECO:0000318"/>
    <property type="project" value="GO_Central"/>
</dbReference>
<dbReference type="GO" id="GO:0016114">
    <property type="term" value="P:terpenoid biosynthetic process"/>
    <property type="evidence" value="ECO:0007669"/>
    <property type="project" value="UniProtKB-UniRule"/>
</dbReference>
<dbReference type="CDD" id="cd13944">
    <property type="entry name" value="lytB_ispH"/>
    <property type="match status" value="1"/>
</dbReference>
<dbReference type="Gene3D" id="3.40.50.11270">
    <property type="match status" value="1"/>
</dbReference>
<dbReference type="Gene3D" id="3.40.1010.20">
    <property type="entry name" value="4-hydroxy-3-methylbut-2-enyl diphosphate reductase, catalytic domain"/>
    <property type="match status" value="2"/>
</dbReference>
<dbReference type="HAMAP" id="MF_00191">
    <property type="entry name" value="IspH"/>
    <property type="match status" value="1"/>
</dbReference>
<dbReference type="InterPro" id="IPR003451">
    <property type="entry name" value="LytB/IspH"/>
</dbReference>
<dbReference type="NCBIfam" id="TIGR00216">
    <property type="entry name" value="ispH_lytB"/>
    <property type="match status" value="1"/>
</dbReference>
<dbReference type="NCBIfam" id="NF002187">
    <property type="entry name" value="PRK01045.1-1"/>
    <property type="match status" value="1"/>
</dbReference>
<dbReference type="PANTHER" id="PTHR30426">
    <property type="entry name" value="4-HYDROXY-3-METHYLBUT-2-ENYL DIPHOSPHATE REDUCTASE"/>
    <property type="match status" value="1"/>
</dbReference>
<dbReference type="PANTHER" id="PTHR30426:SF0">
    <property type="entry name" value="4-HYDROXY-3-METHYLBUT-2-ENYL DIPHOSPHATE REDUCTASE"/>
    <property type="match status" value="1"/>
</dbReference>
<dbReference type="Pfam" id="PF02401">
    <property type="entry name" value="LYTB"/>
    <property type="match status" value="1"/>
</dbReference>
<evidence type="ECO:0000255" key="1">
    <source>
        <dbReference type="HAMAP-Rule" id="MF_00191"/>
    </source>
</evidence>
<feature type="chain" id="PRO_0000128833" description="4-hydroxy-3-methylbut-2-enyl diphosphate reductase">
    <location>
        <begin position="1"/>
        <end position="331"/>
    </location>
</feature>
<feature type="active site" description="Proton donor" evidence="1">
    <location>
        <position position="133"/>
    </location>
</feature>
<feature type="binding site" evidence="1">
    <location>
        <position position="12"/>
    </location>
    <ligand>
        <name>[4Fe-4S] cluster</name>
        <dbReference type="ChEBI" id="CHEBI:49883"/>
    </ligand>
</feature>
<feature type="binding site" evidence="1">
    <location>
        <position position="43"/>
    </location>
    <ligand>
        <name>(2E)-4-hydroxy-3-methylbut-2-enyl diphosphate</name>
        <dbReference type="ChEBI" id="CHEBI:128753"/>
    </ligand>
</feature>
<feature type="binding site" evidence="1">
    <location>
        <position position="43"/>
    </location>
    <ligand>
        <name>dimethylallyl diphosphate</name>
        <dbReference type="ChEBI" id="CHEBI:57623"/>
    </ligand>
</feature>
<feature type="binding site" evidence="1">
    <location>
        <position position="43"/>
    </location>
    <ligand>
        <name>isopentenyl diphosphate</name>
        <dbReference type="ChEBI" id="CHEBI:128769"/>
    </ligand>
</feature>
<feature type="binding site" evidence="1">
    <location>
        <position position="81"/>
    </location>
    <ligand>
        <name>(2E)-4-hydroxy-3-methylbut-2-enyl diphosphate</name>
        <dbReference type="ChEBI" id="CHEBI:128753"/>
    </ligand>
</feature>
<feature type="binding site" evidence="1">
    <location>
        <position position="81"/>
    </location>
    <ligand>
        <name>dimethylallyl diphosphate</name>
        <dbReference type="ChEBI" id="CHEBI:57623"/>
    </ligand>
</feature>
<feature type="binding site" evidence="1">
    <location>
        <position position="81"/>
    </location>
    <ligand>
        <name>isopentenyl diphosphate</name>
        <dbReference type="ChEBI" id="CHEBI:128769"/>
    </ligand>
</feature>
<feature type="binding site" evidence="1">
    <location>
        <position position="103"/>
    </location>
    <ligand>
        <name>[4Fe-4S] cluster</name>
        <dbReference type="ChEBI" id="CHEBI:49883"/>
    </ligand>
</feature>
<feature type="binding site" evidence="1">
    <location>
        <position position="131"/>
    </location>
    <ligand>
        <name>(2E)-4-hydroxy-3-methylbut-2-enyl diphosphate</name>
        <dbReference type="ChEBI" id="CHEBI:128753"/>
    </ligand>
</feature>
<feature type="binding site" evidence="1">
    <location>
        <position position="131"/>
    </location>
    <ligand>
        <name>dimethylallyl diphosphate</name>
        <dbReference type="ChEBI" id="CHEBI:57623"/>
    </ligand>
</feature>
<feature type="binding site" evidence="1">
    <location>
        <position position="131"/>
    </location>
    <ligand>
        <name>isopentenyl diphosphate</name>
        <dbReference type="ChEBI" id="CHEBI:128769"/>
    </ligand>
</feature>
<feature type="binding site" evidence="1">
    <location>
        <position position="170"/>
    </location>
    <ligand>
        <name>(2E)-4-hydroxy-3-methylbut-2-enyl diphosphate</name>
        <dbReference type="ChEBI" id="CHEBI:128753"/>
    </ligand>
</feature>
<feature type="binding site" evidence="1">
    <location>
        <position position="198"/>
    </location>
    <ligand>
        <name>[4Fe-4S] cluster</name>
        <dbReference type="ChEBI" id="CHEBI:49883"/>
    </ligand>
</feature>
<feature type="binding site" evidence="1">
    <location>
        <position position="226"/>
    </location>
    <ligand>
        <name>(2E)-4-hydroxy-3-methylbut-2-enyl diphosphate</name>
        <dbReference type="ChEBI" id="CHEBI:128753"/>
    </ligand>
</feature>
<feature type="binding site" evidence="1">
    <location>
        <position position="226"/>
    </location>
    <ligand>
        <name>dimethylallyl diphosphate</name>
        <dbReference type="ChEBI" id="CHEBI:57623"/>
    </ligand>
</feature>
<feature type="binding site" evidence="1">
    <location>
        <position position="226"/>
    </location>
    <ligand>
        <name>isopentenyl diphosphate</name>
        <dbReference type="ChEBI" id="CHEBI:128769"/>
    </ligand>
</feature>
<feature type="binding site" evidence="1">
    <location>
        <position position="228"/>
    </location>
    <ligand>
        <name>(2E)-4-hydroxy-3-methylbut-2-enyl diphosphate</name>
        <dbReference type="ChEBI" id="CHEBI:128753"/>
    </ligand>
</feature>
<feature type="binding site" evidence="1">
    <location>
        <position position="228"/>
    </location>
    <ligand>
        <name>dimethylallyl diphosphate</name>
        <dbReference type="ChEBI" id="CHEBI:57623"/>
    </ligand>
</feature>
<feature type="binding site" evidence="1">
    <location>
        <position position="228"/>
    </location>
    <ligand>
        <name>isopentenyl diphosphate</name>
        <dbReference type="ChEBI" id="CHEBI:128769"/>
    </ligand>
</feature>
<feature type="binding site" evidence="1">
    <location>
        <position position="271"/>
    </location>
    <ligand>
        <name>(2E)-4-hydroxy-3-methylbut-2-enyl diphosphate</name>
        <dbReference type="ChEBI" id="CHEBI:128753"/>
    </ligand>
</feature>
<feature type="binding site" evidence="1">
    <location>
        <position position="271"/>
    </location>
    <ligand>
        <name>dimethylallyl diphosphate</name>
        <dbReference type="ChEBI" id="CHEBI:57623"/>
    </ligand>
</feature>
<feature type="binding site" evidence="1">
    <location>
        <position position="271"/>
    </location>
    <ligand>
        <name>isopentenyl diphosphate</name>
        <dbReference type="ChEBI" id="CHEBI:128769"/>
    </ligand>
</feature>
<accession>P58676</accession>
<reference key="1">
    <citation type="journal article" date="2001" name="Science">
        <title>Comparative genomics of Listeria species.</title>
        <authorList>
            <person name="Glaser P."/>
            <person name="Frangeul L."/>
            <person name="Buchrieser C."/>
            <person name="Rusniok C."/>
            <person name="Amend A."/>
            <person name="Baquero F."/>
            <person name="Berche P."/>
            <person name="Bloecker H."/>
            <person name="Brandt P."/>
            <person name="Chakraborty T."/>
            <person name="Charbit A."/>
            <person name="Chetouani F."/>
            <person name="Couve E."/>
            <person name="de Daruvar A."/>
            <person name="Dehoux P."/>
            <person name="Domann E."/>
            <person name="Dominguez-Bernal G."/>
            <person name="Duchaud E."/>
            <person name="Durant L."/>
            <person name="Dussurget O."/>
            <person name="Entian K.-D."/>
            <person name="Fsihi H."/>
            <person name="Garcia-del Portillo F."/>
            <person name="Garrido P."/>
            <person name="Gautier L."/>
            <person name="Goebel W."/>
            <person name="Gomez-Lopez N."/>
            <person name="Hain T."/>
            <person name="Hauf J."/>
            <person name="Jackson D."/>
            <person name="Jones L.-M."/>
            <person name="Kaerst U."/>
            <person name="Kreft J."/>
            <person name="Kuhn M."/>
            <person name="Kunst F."/>
            <person name="Kurapkat G."/>
            <person name="Madueno E."/>
            <person name="Maitournam A."/>
            <person name="Mata Vicente J."/>
            <person name="Ng E."/>
            <person name="Nedjari H."/>
            <person name="Nordsiek G."/>
            <person name="Novella S."/>
            <person name="de Pablos B."/>
            <person name="Perez-Diaz J.-C."/>
            <person name="Purcell R."/>
            <person name="Remmel B."/>
            <person name="Rose M."/>
            <person name="Schlueter T."/>
            <person name="Simoes N."/>
            <person name="Tierrez A."/>
            <person name="Vazquez-Boland J.-A."/>
            <person name="Voss H."/>
            <person name="Wehland J."/>
            <person name="Cossart P."/>
        </authorList>
    </citation>
    <scope>NUCLEOTIDE SEQUENCE [LARGE SCALE GENOMIC DNA]</scope>
    <source>
        <strain>ATCC BAA-679 / EGD-e</strain>
    </source>
</reference>
<comment type="function">
    <text evidence="1">Catalyzes the conversion of 1-hydroxy-2-methyl-2-(E)-butenyl 4-diphosphate (HMBPP) into a mixture of isopentenyl diphosphate (IPP) and dimethylallyl diphosphate (DMAPP). Acts in the terminal step of the DOXP/MEP pathway for isoprenoid precursor biosynthesis.</text>
</comment>
<comment type="catalytic activity">
    <reaction evidence="1">
        <text>isopentenyl diphosphate + 2 oxidized [2Fe-2S]-[ferredoxin] + H2O = (2E)-4-hydroxy-3-methylbut-2-enyl diphosphate + 2 reduced [2Fe-2S]-[ferredoxin] + 2 H(+)</text>
        <dbReference type="Rhea" id="RHEA:24488"/>
        <dbReference type="Rhea" id="RHEA-COMP:10000"/>
        <dbReference type="Rhea" id="RHEA-COMP:10001"/>
        <dbReference type="ChEBI" id="CHEBI:15377"/>
        <dbReference type="ChEBI" id="CHEBI:15378"/>
        <dbReference type="ChEBI" id="CHEBI:33737"/>
        <dbReference type="ChEBI" id="CHEBI:33738"/>
        <dbReference type="ChEBI" id="CHEBI:128753"/>
        <dbReference type="ChEBI" id="CHEBI:128769"/>
        <dbReference type="EC" id="1.17.7.4"/>
    </reaction>
</comment>
<comment type="catalytic activity">
    <reaction evidence="1">
        <text>dimethylallyl diphosphate + 2 oxidized [2Fe-2S]-[ferredoxin] + H2O = (2E)-4-hydroxy-3-methylbut-2-enyl diphosphate + 2 reduced [2Fe-2S]-[ferredoxin] + 2 H(+)</text>
        <dbReference type="Rhea" id="RHEA:24825"/>
        <dbReference type="Rhea" id="RHEA-COMP:10000"/>
        <dbReference type="Rhea" id="RHEA-COMP:10001"/>
        <dbReference type="ChEBI" id="CHEBI:15377"/>
        <dbReference type="ChEBI" id="CHEBI:15378"/>
        <dbReference type="ChEBI" id="CHEBI:33737"/>
        <dbReference type="ChEBI" id="CHEBI:33738"/>
        <dbReference type="ChEBI" id="CHEBI:57623"/>
        <dbReference type="ChEBI" id="CHEBI:128753"/>
        <dbReference type="EC" id="1.17.7.4"/>
    </reaction>
</comment>
<comment type="cofactor">
    <cofactor evidence="1">
        <name>[4Fe-4S] cluster</name>
        <dbReference type="ChEBI" id="CHEBI:49883"/>
    </cofactor>
    <text evidence="1">Binds 1 [4Fe-4S] cluster per subunit.</text>
</comment>
<comment type="pathway">
    <text evidence="1">Isoprenoid biosynthesis; dimethylallyl diphosphate biosynthesis; dimethylallyl diphosphate from (2E)-4-hydroxy-3-methylbutenyl diphosphate: step 1/1.</text>
</comment>
<comment type="pathway">
    <text evidence="1">Isoprenoid biosynthesis; isopentenyl diphosphate biosynthesis via DXP pathway; isopentenyl diphosphate from 1-deoxy-D-xylulose 5-phosphate: step 6/6.</text>
</comment>
<comment type="similarity">
    <text evidence="1">Belongs to the IspH family.</text>
</comment>
<proteinExistence type="inferred from homology"/>
<keyword id="KW-0004">4Fe-4S</keyword>
<keyword id="KW-0408">Iron</keyword>
<keyword id="KW-0411">Iron-sulfur</keyword>
<keyword id="KW-0414">Isoprene biosynthesis</keyword>
<keyword id="KW-0479">Metal-binding</keyword>
<keyword id="KW-0560">Oxidoreductase</keyword>
<keyword id="KW-1185">Reference proteome</keyword>
<gene>
    <name evidence="1" type="primary">ispH</name>
    <name type="synonym">lytB</name>
    <name type="ordered locus">lmo1451</name>
</gene>